<sequence length="451" mass="49164">MLKYFGTDGVRGVANAGLTPEMAFKLGRDGGYVLTKDKKDGERAKVLVSRDTRISGQMLEYALISGLLSVGIEVLEVGVITTPGLSYLVRAQGADAGVQISASHNPVEDNGIKFFGSDGLKLSDAKEEEIEKLIDAPEDKLPRPSAEGLGTVTNYHEGASKYLQFIENTLPEELSGIKVVVDGANGAASALISRLFADMGVDFTTIATHPDGLNINDHVGATHTKKLQEEVVKQGAQLGLAFDGDADRCIAVDENGNEVDGDHIMYVIGSYLADHGRLKKDTIVTTVMSNLGFTKALERRGLKNIRTQVGDRYVSEEMRANGYNLGGEQSGHVIISDYHNTGDGMLTGLHLLYVMKDTGKSLSELLSDFKEYPQRLINVPVENKKDWKEHKRITEAIEKVEKELSDEGRIFVRPSGTQSLLRVMTEAPTQELADKYCEEVAKVVEEEMGSN</sequence>
<evidence type="ECO:0000255" key="1">
    <source>
        <dbReference type="HAMAP-Rule" id="MF_01554"/>
    </source>
</evidence>
<evidence type="ECO:0000305" key="2"/>
<comment type="function">
    <text evidence="1">Catalyzes the conversion of glucosamine-6-phosphate to glucosamine-1-phosphate.</text>
</comment>
<comment type="catalytic activity">
    <reaction evidence="1">
        <text>alpha-D-glucosamine 1-phosphate = D-glucosamine 6-phosphate</text>
        <dbReference type="Rhea" id="RHEA:23424"/>
        <dbReference type="ChEBI" id="CHEBI:58516"/>
        <dbReference type="ChEBI" id="CHEBI:58725"/>
        <dbReference type="EC" id="5.4.2.10"/>
    </reaction>
</comment>
<comment type="cofactor">
    <cofactor evidence="1">
        <name>Mg(2+)</name>
        <dbReference type="ChEBI" id="CHEBI:18420"/>
    </cofactor>
    <text evidence="1">Binds 1 Mg(2+) ion per subunit.</text>
</comment>
<comment type="PTM">
    <text evidence="1">Activated by phosphorylation.</text>
</comment>
<comment type="similarity">
    <text evidence="1">Belongs to the phosphohexose mutase family.</text>
</comment>
<comment type="sequence caution" evidence="2">
    <conflict type="erroneous initiation">
        <sequence resource="EMBL-CDS" id="AAS08715"/>
    </conflict>
</comment>
<name>GLMM_LACJO</name>
<protein>
    <recommendedName>
        <fullName evidence="1">Phosphoglucosamine mutase</fullName>
        <ecNumber evidence="1">5.4.2.10</ecNumber>
    </recommendedName>
</protein>
<proteinExistence type="inferred from homology"/>
<reference key="1">
    <citation type="journal article" date="2004" name="Proc. Natl. Acad. Sci. U.S.A.">
        <title>The genome sequence of the probiotic intestinal bacterium Lactobacillus johnsonii NCC 533.</title>
        <authorList>
            <person name="Pridmore R.D."/>
            <person name="Berger B."/>
            <person name="Desiere F."/>
            <person name="Vilanova D."/>
            <person name="Barretto C."/>
            <person name="Pittet A.-C."/>
            <person name="Zwahlen M.-C."/>
            <person name="Rouvet M."/>
            <person name="Altermann E."/>
            <person name="Barrangou R."/>
            <person name="Mollet B."/>
            <person name="Mercenier A."/>
            <person name="Klaenhammer T."/>
            <person name="Arigoni F."/>
            <person name="Schell M.A."/>
        </authorList>
    </citation>
    <scope>NUCLEOTIDE SEQUENCE [LARGE SCALE GENOMIC DNA]</scope>
    <source>
        <strain>CNCM I-1225 / La1 / NCC 533</strain>
    </source>
</reference>
<keyword id="KW-0413">Isomerase</keyword>
<keyword id="KW-0460">Magnesium</keyword>
<keyword id="KW-0479">Metal-binding</keyword>
<keyword id="KW-0597">Phosphoprotein</keyword>
<feature type="chain" id="PRO_0000147903" description="Phosphoglucosamine mutase">
    <location>
        <begin position="1"/>
        <end position="451"/>
    </location>
</feature>
<feature type="active site" description="Phosphoserine intermediate" evidence="1">
    <location>
        <position position="103"/>
    </location>
</feature>
<feature type="binding site" description="via phosphate group" evidence="1">
    <location>
        <position position="103"/>
    </location>
    <ligand>
        <name>Mg(2+)</name>
        <dbReference type="ChEBI" id="CHEBI:18420"/>
    </ligand>
</feature>
<feature type="binding site" evidence="1">
    <location>
        <position position="243"/>
    </location>
    <ligand>
        <name>Mg(2+)</name>
        <dbReference type="ChEBI" id="CHEBI:18420"/>
    </ligand>
</feature>
<feature type="binding site" evidence="1">
    <location>
        <position position="245"/>
    </location>
    <ligand>
        <name>Mg(2+)</name>
        <dbReference type="ChEBI" id="CHEBI:18420"/>
    </ligand>
</feature>
<feature type="binding site" evidence="1">
    <location>
        <position position="247"/>
    </location>
    <ligand>
        <name>Mg(2+)</name>
        <dbReference type="ChEBI" id="CHEBI:18420"/>
    </ligand>
</feature>
<feature type="modified residue" description="Phosphoserine" evidence="1">
    <location>
        <position position="103"/>
    </location>
</feature>
<accession>Q74K59</accession>
<organism>
    <name type="scientific">Lactobacillus johnsonii (strain CNCM I-12250 / La1 / NCC 533)</name>
    <dbReference type="NCBI Taxonomy" id="257314"/>
    <lineage>
        <taxon>Bacteria</taxon>
        <taxon>Bacillati</taxon>
        <taxon>Bacillota</taxon>
        <taxon>Bacilli</taxon>
        <taxon>Lactobacillales</taxon>
        <taxon>Lactobacillaceae</taxon>
        <taxon>Lactobacillus</taxon>
    </lineage>
</organism>
<dbReference type="EC" id="5.4.2.10" evidence="1"/>
<dbReference type="EMBL" id="AE017198">
    <property type="protein sequence ID" value="AAS08715.1"/>
    <property type="status" value="ALT_INIT"/>
    <property type="molecule type" value="Genomic_DNA"/>
</dbReference>
<dbReference type="RefSeq" id="WP_012846420.1">
    <property type="nucleotide sequence ID" value="NC_005362.1"/>
</dbReference>
<dbReference type="SMR" id="Q74K59"/>
<dbReference type="GeneID" id="83570708"/>
<dbReference type="KEGG" id="ljo:LJ_0894"/>
<dbReference type="eggNOG" id="COG1109">
    <property type="taxonomic scope" value="Bacteria"/>
</dbReference>
<dbReference type="HOGENOM" id="CLU_016950_7_0_9"/>
<dbReference type="Proteomes" id="UP000000581">
    <property type="component" value="Chromosome"/>
</dbReference>
<dbReference type="GO" id="GO:0005829">
    <property type="term" value="C:cytosol"/>
    <property type="evidence" value="ECO:0007669"/>
    <property type="project" value="TreeGrafter"/>
</dbReference>
<dbReference type="GO" id="GO:0000287">
    <property type="term" value="F:magnesium ion binding"/>
    <property type="evidence" value="ECO:0007669"/>
    <property type="project" value="UniProtKB-UniRule"/>
</dbReference>
<dbReference type="GO" id="GO:0008966">
    <property type="term" value="F:phosphoglucosamine mutase activity"/>
    <property type="evidence" value="ECO:0007669"/>
    <property type="project" value="UniProtKB-UniRule"/>
</dbReference>
<dbReference type="GO" id="GO:0004615">
    <property type="term" value="F:phosphomannomutase activity"/>
    <property type="evidence" value="ECO:0007669"/>
    <property type="project" value="TreeGrafter"/>
</dbReference>
<dbReference type="GO" id="GO:0005975">
    <property type="term" value="P:carbohydrate metabolic process"/>
    <property type="evidence" value="ECO:0007669"/>
    <property type="project" value="InterPro"/>
</dbReference>
<dbReference type="GO" id="GO:0009252">
    <property type="term" value="P:peptidoglycan biosynthetic process"/>
    <property type="evidence" value="ECO:0007669"/>
    <property type="project" value="TreeGrafter"/>
</dbReference>
<dbReference type="GO" id="GO:0006048">
    <property type="term" value="P:UDP-N-acetylglucosamine biosynthetic process"/>
    <property type="evidence" value="ECO:0007669"/>
    <property type="project" value="TreeGrafter"/>
</dbReference>
<dbReference type="CDD" id="cd05802">
    <property type="entry name" value="GlmM"/>
    <property type="match status" value="1"/>
</dbReference>
<dbReference type="FunFam" id="3.30.310.50:FF:000001">
    <property type="entry name" value="Phosphoglucosamine mutase"/>
    <property type="match status" value="1"/>
</dbReference>
<dbReference type="FunFam" id="3.40.120.10:FF:000001">
    <property type="entry name" value="Phosphoglucosamine mutase"/>
    <property type="match status" value="1"/>
</dbReference>
<dbReference type="FunFam" id="3.40.120.10:FF:000002">
    <property type="entry name" value="Phosphoglucosamine mutase"/>
    <property type="match status" value="1"/>
</dbReference>
<dbReference type="Gene3D" id="3.40.120.10">
    <property type="entry name" value="Alpha-D-Glucose-1,6-Bisphosphate, subunit A, domain 3"/>
    <property type="match status" value="3"/>
</dbReference>
<dbReference type="Gene3D" id="3.30.310.50">
    <property type="entry name" value="Alpha-D-phosphohexomutase, C-terminal domain"/>
    <property type="match status" value="1"/>
</dbReference>
<dbReference type="HAMAP" id="MF_01554_B">
    <property type="entry name" value="GlmM_B"/>
    <property type="match status" value="1"/>
</dbReference>
<dbReference type="InterPro" id="IPR005844">
    <property type="entry name" value="A-D-PHexomutase_a/b/a-I"/>
</dbReference>
<dbReference type="InterPro" id="IPR016055">
    <property type="entry name" value="A-D-PHexomutase_a/b/a-I/II/III"/>
</dbReference>
<dbReference type="InterPro" id="IPR005845">
    <property type="entry name" value="A-D-PHexomutase_a/b/a-II"/>
</dbReference>
<dbReference type="InterPro" id="IPR005846">
    <property type="entry name" value="A-D-PHexomutase_a/b/a-III"/>
</dbReference>
<dbReference type="InterPro" id="IPR005843">
    <property type="entry name" value="A-D-PHexomutase_C"/>
</dbReference>
<dbReference type="InterPro" id="IPR036900">
    <property type="entry name" value="A-D-PHexomutase_C_sf"/>
</dbReference>
<dbReference type="InterPro" id="IPR016066">
    <property type="entry name" value="A-D-PHexomutase_CS"/>
</dbReference>
<dbReference type="InterPro" id="IPR005841">
    <property type="entry name" value="Alpha-D-phosphohexomutase_SF"/>
</dbReference>
<dbReference type="InterPro" id="IPR006352">
    <property type="entry name" value="GlmM_bact"/>
</dbReference>
<dbReference type="InterPro" id="IPR050060">
    <property type="entry name" value="Phosphoglucosamine_mutase"/>
</dbReference>
<dbReference type="NCBIfam" id="TIGR01455">
    <property type="entry name" value="glmM"/>
    <property type="match status" value="1"/>
</dbReference>
<dbReference type="NCBIfam" id="NF008139">
    <property type="entry name" value="PRK10887.1"/>
    <property type="match status" value="1"/>
</dbReference>
<dbReference type="PANTHER" id="PTHR42946:SF1">
    <property type="entry name" value="PHOSPHOGLUCOMUTASE (ALPHA-D-GLUCOSE-1,6-BISPHOSPHATE-DEPENDENT)"/>
    <property type="match status" value="1"/>
</dbReference>
<dbReference type="PANTHER" id="PTHR42946">
    <property type="entry name" value="PHOSPHOHEXOSE MUTASE"/>
    <property type="match status" value="1"/>
</dbReference>
<dbReference type="Pfam" id="PF02878">
    <property type="entry name" value="PGM_PMM_I"/>
    <property type="match status" value="1"/>
</dbReference>
<dbReference type="Pfam" id="PF02879">
    <property type="entry name" value="PGM_PMM_II"/>
    <property type="match status" value="1"/>
</dbReference>
<dbReference type="Pfam" id="PF02880">
    <property type="entry name" value="PGM_PMM_III"/>
    <property type="match status" value="1"/>
</dbReference>
<dbReference type="Pfam" id="PF00408">
    <property type="entry name" value="PGM_PMM_IV"/>
    <property type="match status" value="1"/>
</dbReference>
<dbReference type="PRINTS" id="PR00509">
    <property type="entry name" value="PGMPMM"/>
</dbReference>
<dbReference type="SUPFAM" id="SSF55957">
    <property type="entry name" value="Phosphoglucomutase, C-terminal domain"/>
    <property type="match status" value="1"/>
</dbReference>
<dbReference type="SUPFAM" id="SSF53738">
    <property type="entry name" value="Phosphoglucomutase, first 3 domains"/>
    <property type="match status" value="3"/>
</dbReference>
<dbReference type="PROSITE" id="PS00710">
    <property type="entry name" value="PGM_PMM"/>
    <property type="match status" value="1"/>
</dbReference>
<gene>
    <name evidence="1" type="primary">glmM</name>
    <name type="ordered locus">LJ_0894</name>
</gene>